<dbReference type="EMBL" id="CP000720">
    <property type="protein sequence ID" value="ABS47889.1"/>
    <property type="molecule type" value="Genomic_DNA"/>
</dbReference>
<dbReference type="RefSeq" id="WP_002211065.1">
    <property type="nucleotide sequence ID" value="NC_009708.1"/>
</dbReference>
<dbReference type="GeneID" id="57976826"/>
<dbReference type="KEGG" id="ypi:YpsIP31758_2372"/>
<dbReference type="HOGENOM" id="CLU_096410_0_0_6"/>
<dbReference type="Proteomes" id="UP000002412">
    <property type="component" value="Chromosome"/>
</dbReference>
<dbReference type="GO" id="GO:0005886">
    <property type="term" value="C:plasma membrane"/>
    <property type="evidence" value="ECO:0007669"/>
    <property type="project" value="UniProtKB-SubCell"/>
</dbReference>
<dbReference type="GO" id="GO:0005384">
    <property type="term" value="F:manganese ion transmembrane transporter activity"/>
    <property type="evidence" value="ECO:0007669"/>
    <property type="project" value="UniProtKB-UniRule"/>
</dbReference>
<dbReference type="HAMAP" id="MF_01521">
    <property type="entry name" value="MntP_pump"/>
    <property type="match status" value="1"/>
</dbReference>
<dbReference type="InterPro" id="IPR003810">
    <property type="entry name" value="Mntp/YtaF"/>
</dbReference>
<dbReference type="InterPro" id="IPR022929">
    <property type="entry name" value="Put_MntP"/>
</dbReference>
<dbReference type="NCBIfam" id="NF008546">
    <property type="entry name" value="PRK11469.1"/>
    <property type="match status" value="1"/>
</dbReference>
<dbReference type="PANTHER" id="PTHR35529">
    <property type="entry name" value="MANGANESE EFFLUX PUMP MNTP-RELATED"/>
    <property type="match status" value="1"/>
</dbReference>
<dbReference type="PANTHER" id="PTHR35529:SF1">
    <property type="entry name" value="MANGANESE EFFLUX PUMP MNTP-RELATED"/>
    <property type="match status" value="1"/>
</dbReference>
<dbReference type="Pfam" id="PF02659">
    <property type="entry name" value="Mntp"/>
    <property type="match status" value="1"/>
</dbReference>
<feature type="chain" id="PRO_1000068639" description="Putative manganese efflux pump MntP">
    <location>
        <begin position="1"/>
        <end position="189"/>
    </location>
</feature>
<feature type="transmembrane region" description="Helical" evidence="1">
    <location>
        <begin position="3"/>
        <end position="23"/>
    </location>
</feature>
<feature type="transmembrane region" description="Helical" evidence="1">
    <location>
        <begin position="41"/>
        <end position="61"/>
    </location>
</feature>
<feature type="transmembrane region" description="Helical" evidence="1">
    <location>
        <begin position="65"/>
        <end position="85"/>
    </location>
</feature>
<feature type="transmembrane region" description="Helical" evidence="1">
    <location>
        <begin position="104"/>
        <end position="124"/>
    </location>
</feature>
<feature type="transmembrane region" description="Helical" evidence="1">
    <location>
        <begin position="132"/>
        <end position="152"/>
    </location>
</feature>
<feature type="transmembrane region" description="Helical" evidence="1">
    <location>
        <begin position="167"/>
        <end position="187"/>
    </location>
</feature>
<protein>
    <recommendedName>
        <fullName evidence="1">Putative manganese efflux pump MntP</fullName>
    </recommendedName>
</protein>
<evidence type="ECO:0000255" key="1">
    <source>
        <dbReference type="HAMAP-Rule" id="MF_01521"/>
    </source>
</evidence>
<gene>
    <name evidence="1" type="primary">mntP</name>
    <name type="ordered locus">YpsIP31758_2372</name>
</gene>
<reference key="1">
    <citation type="journal article" date="2007" name="PLoS Genet.">
        <title>The complete genome sequence of Yersinia pseudotuberculosis IP31758, the causative agent of Far East scarlet-like fever.</title>
        <authorList>
            <person name="Eppinger M."/>
            <person name="Rosovitz M.J."/>
            <person name="Fricke W.F."/>
            <person name="Rasko D.A."/>
            <person name="Kokorina G."/>
            <person name="Fayolle C."/>
            <person name="Lindler L.E."/>
            <person name="Carniel E."/>
            <person name="Ravel J."/>
        </authorList>
    </citation>
    <scope>NUCLEOTIDE SEQUENCE [LARGE SCALE GENOMIC DNA]</scope>
    <source>
        <strain>IP 31758</strain>
    </source>
</reference>
<keyword id="KW-0997">Cell inner membrane</keyword>
<keyword id="KW-1003">Cell membrane</keyword>
<keyword id="KW-0406">Ion transport</keyword>
<keyword id="KW-0464">Manganese</keyword>
<keyword id="KW-0472">Membrane</keyword>
<keyword id="KW-0812">Transmembrane</keyword>
<keyword id="KW-1133">Transmembrane helix</keyword>
<keyword id="KW-0813">Transport</keyword>
<proteinExistence type="inferred from homology"/>
<name>MNTP_YERP3</name>
<accession>A7FJB3</accession>
<organism>
    <name type="scientific">Yersinia pseudotuberculosis serotype O:1b (strain IP 31758)</name>
    <dbReference type="NCBI Taxonomy" id="349747"/>
    <lineage>
        <taxon>Bacteria</taxon>
        <taxon>Pseudomonadati</taxon>
        <taxon>Pseudomonadota</taxon>
        <taxon>Gammaproteobacteria</taxon>
        <taxon>Enterobacterales</taxon>
        <taxon>Yersiniaceae</taxon>
        <taxon>Yersinia</taxon>
    </lineage>
</organism>
<sequence length="189" mass="20660">MNLSATIILAFAMSMDAFAASIGKGATLYKPRFREALRTGLIFGVIEAITPLIGWCIGLFASQYIMEWDHWIAFSLLFILGCRMIFEGMKQRVAETEKMRSHSFWVLVTTAIATSLDAMAIGVGLAFLQVDIVHTAMAIGLATMIMATLGMLIGRYIGPLLGKRAEIIGGIVLIGIGFNILYEHMHLTA</sequence>
<comment type="function">
    <text evidence="1">Probably functions as a manganese efflux pump.</text>
</comment>
<comment type="subcellular location">
    <subcellularLocation>
        <location evidence="1">Cell inner membrane</location>
        <topology evidence="1">Multi-pass membrane protein</topology>
    </subcellularLocation>
</comment>
<comment type="similarity">
    <text evidence="1">Belongs to the MntP (TC 9.B.29) family.</text>
</comment>